<proteinExistence type="inferred from homology"/>
<evidence type="ECO:0000255" key="1">
    <source>
        <dbReference type="HAMAP-Rule" id="MF_00148"/>
    </source>
</evidence>
<evidence type="ECO:0000305" key="2"/>
<reference key="1">
    <citation type="journal article" date="2001" name="J. Bacteriol.">
        <title>Genome of the bacterium Streptococcus pneumoniae strain R6.</title>
        <authorList>
            <person name="Hoskins J."/>
            <person name="Alborn W.E. Jr."/>
            <person name="Arnold J."/>
            <person name="Blaszczak L.C."/>
            <person name="Burgett S."/>
            <person name="DeHoff B.S."/>
            <person name="Estrem S.T."/>
            <person name="Fritz L."/>
            <person name="Fu D.-J."/>
            <person name="Fuller W."/>
            <person name="Geringer C."/>
            <person name="Gilmour R."/>
            <person name="Glass J.S."/>
            <person name="Khoja H."/>
            <person name="Kraft A.R."/>
            <person name="Lagace R.E."/>
            <person name="LeBlanc D.J."/>
            <person name="Lee L.N."/>
            <person name="Lefkowitz E.J."/>
            <person name="Lu J."/>
            <person name="Matsushima P."/>
            <person name="McAhren S.M."/>
            <person name="McHenney M."/>
            <person name="McLeaster K."/>
            <person name="Mundy C.W."/>
            <person name="Nicas T.I."/>
            <person name="Norris F.H."/>
            <person name="O'Gara M."/>
            <person name="Peery R.B."/>
            <person name="Robertson G.T."/>
            <person name="Rockey P."/>
            <person name="Sun P.-M."/>
            <person name="Winkler M.E."/>
            <person name="Yang Y."/>
            <person name="Young-Bellido M."/>
            <person name="Zhao G."/>
            <person name="Zook C.A."/>
            <person name="Baltz R.H."/>
            <person name="Jaskunas S.R."/>
            <person name="Rosteck P.R. Jr."/>
            <person name="Skatrud P.L."/>
            <person name="Glass J.I."/>
        </authorList>
    </citation>
    <scope>NUCLEOTIDE SEQUENCE [LARGE SCALE GENOMIC DNA]</scope>
    <source>
        <strain>ATCC BAA-255 / R6</strain>
    </source>
</reference>
<accession>Q8DPQ4</accession>
<gene>
    <name evidence="1" type="primary">ung</name>
    <name type="ordered locus">spr1055</name>
</gene>
<sequence length="217" mass="24080">MEHSSWHALIKAQLPEGYFGKINQFMEQVYSQGIIYPPKEKVFQALLTTLLEEVKVVILGQDPYHGPGQAQGLSFSVPDSIPAPPSLQNILKELSDDIGVKKSHDLTAWAEQGVLLLNACLTVPAGQANGHAGQIWEPFTDAVIQVVNHLDRPVVFVLWGAYARKKKALVTNPHHLIIESAHPSPLSVYRGFWGSKPFSKANTFLKETGQEPIDWLR</sequence>
<name>UNG_STRR6</name>
<organism>
    <name type="scientific">Streptococcus pneumoniae (strain ATCC BAA-255 / R6)</name>
    <dbReference type="NCBI Taxonomy" id="171101"/>
    <lineage>
        <taxon>Bacteria</taxon>
        <taxon>Bacillati</taxon>
        <taxon>Bacillota</taxon>
        <taxon>Bacilli</taxon>
        <taxon>Lactobacillales</taxon>
        <taxon>Streptococcaceae</taxon>
        <taxon>Streptococcus</taxon>
    </lineage>
</organism>
<protein>
    <recommendedName>
        <fullName evidence="1">Uracil-DNA glycosylase</fullName>
        <shortName evidence="1">UDG</shortName>
        <ecNumber evidence="1">3.2.2.27</ecNumber>
    </recommendedName>
</protein>
<keyword id="KW-0963">Cytoplasm</keyword>
<keyword id="KW-0227">DNA damage</keyword>
<keyword id="KW-0234">DNA repair</keyword>
<keyword id="KW-0378">Hydrolase</keyword>
<keyword id="KW-1185">Reference proteome</keyword>
<feature type="chain" id="PRO_0000176153" description="Uracil-DNA glycosylase">
    <location>
        <begin position="1"/>
        <end position="217"/>
    </location>
</feature>
<feature type="active site" description="Proton acceptor" evidence="1">
    <location>
        <position position="62"/>
    </location>
</feature>
<dbReference type="EC" id="3.2.2.27" evidence="1"/>
<dbReference type="EMBL" id="AE007317">
    <property type="protein sequence ID" value="AAK99859.1"/>
    <property type="status" value="ALT_INIT"/>
    <property type="molecule type" value="Genomic_DNA"/>
</dbReference>
<dbReference type="PIR" id="G98003">
    <property type="entry name" value="G98003"/>
</dbReference>
<dbReference type="RefSeq" id="NP_358649.1">
    <property type="nucleotide sequence ID" value="NC_003098.1"/>
</dbReference>
<dbReference type="RefSeq" id="WP_000401328.1">
    <property type="nucleotide sequence ID" value="NC_003098.1"/>
</dbReference>
<dbReference type="SMR" id="Q8DPQ4"/>
<dbReference type="STRING" id="171101.spr1055"/>
<dbReference type="KEGG" id="spr:spr1055"/>
<dbReference type="PATRIC" id="fig|171101.6.peg.1147"/>
<dbReference type="eggNOG" id="COG0692">
    <property type="taxonomic scope" value="Bacteria"/>
</dbReference>
<dbReference type="HOGENOM" id="CLU_032162_3_1_9"/>
<dbReference type="Proteomes" id="UP000000586">
    <property type="component" value="Chromosome"/>
</dbReference>
<dbReference type="GO" id="GO:0005737">
    <property type="term" value="C:cytoplasm"/>
    <property type="evidence" value="ECO:0007669"/>
    <property type="project" value="UniProtKB-SubCell"/>
</dbReference>
<dbReference type="GO" id="GO:0004844">
    <property type="term" value="F:uracil DNA N-glycosylase activity"/>
    <property type="evidence" value="ECO:0007669"/>
    <property type="project" value="UniProtKB-UniRule"/>
</dbReference>
<dbReference type="GO" id="GO:0097510">
    <property type="term" value="P:base-excision repair, AP site formation via deaminated base removal"/>
    <property type="evidence" value="ECO:0000318"/>
    <property type="project" value="GO_Central"/>
</dbReference>
<dbReference type="CDD" id="cd10027">
    <property type="entry name" value="UDG-F1-like"/>
    <property type="match status" value="1"/>
</dbReference>
<dbReference type="FunFam" id="3.40.470.10:FF:000008">
    <property type="entry name" value="Uracil-DNA glycosylase"/>
    <property type="match status" value="1"/>
</dbReference>
<dbReference type="Gene3D" id="3.40.470.10">
    <property type="entry name" value="Uracil-DNA glycosylase-like domain"/>
    <property type="match status" value="1"/>
</dbReference>
<dbReference type="HAMAP" id="MF_00148">
    <property type="entry name" value="UDG"/>
    <property type="match status" value="1"/>
</dbReference>
<dbReference type="InterPro" id="IPR002043">
    <property type="entry name" value="UDG_fam1"/>
</dbReference>
<dbReference type="InterPro" id="IPR018085">
    <property type="entry name" value="Ura-DNA_Glyclase_AS"/>
</dbReference>
<dbReference type="InterPro" id="IPR005122">
    <property type="entry name" value="Uracil-DNA_glycosylase-like"/>
</dbReference>
<dbReference type="InterPro" id="IPR036895">
    <property type="entry name" value="Uracil-DNA_glycosylase-like_sf"/>
</dbReference>
<dbReference type="NCBIfam" id="NF003588">
    <property type="entry name" value="PRK05254.1-1"/>
    <property type="match status" value="1"/>
</dbReference>
<dbReference type="NCBIfam" id="NF003589">
    <property type="entry name" value="PRK05254.1-2"/>
    <property type="match status" value="1"/>
</dbReference>
<dbReference type="NCBIfam" id="NF003591">
    <property type="entry name" value="PRK05254.1-4"/>
    <property type="match status" value="1"/>
</dbReference>
<dbReference type="NCBIfam" id="NF003592">
    <property type="entry name" value="PRK05254.1-5"/>
    <property type="match status" value="1"/>
</dbReference>
<dbReference type="NCBIfam" id="TIGR00628">
    <property type="entry name" value="ung"/>
    <property type="match status" value="1"/>
</dbReference>
<dbReference type="PANTHER" id="PTHR11264">
    <property type="entry name" value="URACIL-DNA GLYCOSYLASE"/>
    <property type="match status" value="1"/>
</dbReference>
<dbReference type="PANTHER" id="PTHR11264:SF0">
    <property type="entry name" value="URACIL-DNA GLYCOSYLASE"/>
    <property type="match status" value="1"/>
</dbReference>
<dbReference type="Pfam" id="PF03167">
    <property type="entry name" value="UDG"/>
    <property type="match status" value="1"/>
</dbReference>
<dbReference type="SMART" id="SM00986">
    <property type="entry name" value="UDG"/>
    <property type="match status" value="1"/>
</dbReference>
<dbReference type="SMART" id="SM00987">
    <property type="entry name" value="UreE_C"/>
    <property type="match status" value="1"/>
</dbReference>
<dbReference type="SUPFAM" id="SSF52141">
    <property type="entry name" value="Uracil-DNA glycosylase-like"/>
    <property type="match status" value="1"/>
</dbReference>
<dbReference type="PROSITE" id="PS00130">
    <property type="entry name" value="U_DNA_GLYCOSYLASE"/>
    <property type="match status" value="1"/>
</dbReference>
<comment type="function">
    <text evidence="1">Excises uracil residues from the DNA which can arise as a result of misincorporation of dUMP residues by DNA polymerase or due to deamination of cytosine.</text>
</comment>
<comment type="catalytic activity">
    <reaction evidence="1">
        <text>Hydrolyzes single-stranded DNA or mismatched double-stranded DNA and polynucleotides, releasing free uracil.</text>
        <dbReference type="EC" id="3.2.2.27"/>
    </reaction>
</comment>
<comment type="subcellular location">
    <subcellularLocation>
        <location evidence="1">Cytoplasm</location>
    </subcellularLocation>
</comment>
<comment type="similarity">
    <text evidence="1">Belongs to the uracil-DNA glycosylase (UDG) superfamily. UNG family.</text>
</comment>
<comment type="sequence caution" evidence="2">
    <conflict type="erroneous initiation">
        <sequence resource="EMBL-CDS" id="AAK99859"/>
    </conflict>
</comment>